<evidence type="ECO:0000255" key="1">
    <source>
        <dbReference type="HAMAP-Rule" id="MF_01959"/>
    </source>
</evidence>
<name>CCME_PARM1</name>
<protein>
    <recommendedName>
        <fullName evidence="1">Cytochrome c-type biogenesis protein CcmE</fullName>
    </recommendedName>
    <alternativeName>
        <fullName evidence="1">Cytochrome c maturation protein E</fullName>
    </alternativeName>
    <alternativeName>
        <fullName evidence="1">Heme chaperone CcmE</fullName>
    </alternativeName>
</protein>
<proteinExistence type="inferred from homology"/>
<dbReference type="EMBL" id="AP007255">
    <property type="protein sequence ID" value="BAE53003.1"/>
    <property type="molecule type" value="Genomic_DNA"/>
</dbReference>
<dbReference type="RefSeq" id="WP_011386548.1">
    <property type="nucleotide sequence ID" value="NC_007626.1"/>
</dbReference>
<dbReference type="SMR" id="Q2VZH2"/>
<dbReference type="STRING" id="342108.amb4199"/>
<dbReference type="KEGG" id="mag:amb4199"/>
<dbReference type="HOGENOM" id="CLU_079503_1_1_5"/>
<dbReference type="OrthoDB" id="9793584at2"/>
<dbReference type="Proteomes" id="UP000007058">
    <property type="component" value="Chromosome"/>
</dbReference>
<dbReference type="GO" id="GO:0005886">
    <property type="term" value="C:plasma membrane"/>
    <property type="evidence" value="ECO:0007669"/>
    <property type="project" value="UniProtKB-SubCell"/>
</dbReference>
<dbReference type="GO" id="GO:0020037">
    <property type="term" value="F:heme binding"/>
    <property type="evidence" value="ECO:0007669"/>
    <property type="project" value="InterPro"/>
</dbReference>
<dbReference type="GO" id="GO:0046872">
    <property type="term" value="F:metal ion binding"/>
    <property type="evidence" value="ECO:0007669"/>
    <property type="project" value="UniProtKB-KW"/>
</dbReference>
<dbReference type="GO" id="GO:0017004">
    <property type="term" value="P:cytochrome complex assembly"/>
    <property type="evidence" value="ECO:0007669"/>
    <property type="project" value="UniProtKB-KW"/>
</dbReference>
<dbReference type="FunFam" id="2.40.50.140:FF:000104">
    <property type="entry name" value="Cytochrome c-type biogenesis protein CcmE"/>
    <property type="match status" value="1"/>
</dbReference>
<dbReference type="Gene3D" id="2.40.50.140">
    <property type="entry name" value="Nucleic acid-binding proteins"/>
    <property type="match status" value="1"/>
</dbReference>
<dbReference type="HAMAP" id="MF_01959">
    <property type="entry name" value="CcmE"/>
    <property type="match status" value="1"/>
</dbReference>
<dbReference type="InterPro" id="IPR004329">
    <property type="entry name" value="CcmE"/>
</dbReference>
<dbReference type="InterPro" id="IPR036127">
    <property type="entry name" value="CcmE-like_sf"/>
</dbReference>
<dbReference type="InterPro" id="IPR012340">
    <property type="entry name" value="NA-bd_OB-fold"/>
</dbReference>
<dbReference type="NCBIfam" id="NF009727">
    <property type="entry name" value="PRK13254.1-1"/>
    <property type="match status" value="1"/>
</dbReference>
<dbReference type="NCBIfam" id="NF009729">
    <property type="entry name" value="PRK13254.1-3"/>
    <property type="match status" value="1"/>
</dbReference>
<dbReference type="NCBIfam" id="NF009731">
    <property type="entry name" value="PRK13254.1-5"/>
    <property type="match status" value="1"/>
</dbReference>
<dbReference type="PANTHER" id="PTHR34128">
    <property type="entry name" value="CYTOCHROME C-TYPE BIOGENESIS PROTEIN CCME HOMOLOG, MITOCHONDRIAL"/>
    <property type="match status" value="1"/>
</dbReference>
<dbReference type="PANTHER" id="PTHR34128:SF2">
    <property type="entry name" value="CYTOCHROME C-TYPE BIOGENESIS PROTEIN CCME HOMOLOG, MITOCHONDRIAL"/>
    <property type="match status" value="1"/>
</dbReference>
<dbReference type="Pfam" id="PF03100">
    <property type="entry name" value="CcmE"/>
    <property type="match status" value="1"/>
</dbReference>
<dbReference type="SUPFAM" id="SSF82093">
    <property type="entry name" value="Heme chaperone CcmE"/>
    <property type="match status" value="1"/>
</dbReference>
<feature type="chain" id="PRO_0000238820" description="Cytochrome c-type biogenesis protein CcmE">
    <location>
        <begin position="1"/>
        <end position="148"/>
    </location>
</feature>
<feature type="topological domain" description="Cytoplasmic" evidence="1">
    <location>
        <begin position="1"/>
        <end position="7"/>
    </location>
</feature>
<feature type="transmembrane region" description="Helical; Signal-anchor for type II membrane protein" evidence="1">
    <location>
        <begin position="8"/>
        <end position="28"/>
    </location>
</feature>
<feature type="topological domain" description="Periplasmic" evidence="1">
    <location>
        <begin position="29"/>
        <end position="148"/>
    </location>
</feature>
<feature type="binding site" description="covalent" evidence="1">
    <location>
        <position position="121"/>
    </location>
    <ligand>
        <name>heme</name>
        <dbReference type="ChEBI" id="CHEBI:30413"/>
    </ligand>
</feature>
<feature type="binding site" description="axial binding residue" evidence="1">
    <location>
        <position position="125"/>
    </location>
    <ligand>
        <name>heme</name>
        <dbReference type="ChEBI" id="CHEBI:30413"/>
    </ligand>
    <ligandPart>
        <name>Fe</name>
        <dbReference type="ChEBI" id="CHEBI:18248"/>
    </ligandPart>
</feature>
<keyword id="KW-0997">Cell inner membrane</keyword>
<keyword id="KW-1003">Cell membrane</keyword>
<keyword id="KW-0201">Cytochrome c-type biogenesis</keyword>
<keyword id="KW-0349">Heme</keyword>
<keyword id="KW-0408">Iron</keyword>
<keyword id="KW-0472">Membrane</keyword>
<keyword id="KW-0479">Metal-binding</keyword>
<keyword id="KW-0735">Signal-anchor</keyword>
<keyword id="KW-0812">Transmembrane</keyword>
<keyword id="KW-1133">Transmembrane helix</keyword>
<accession>Q2VZH2</accession>
<comment type="function">
    <text evidence="1">Heme chaperone required for the biogenesis of c-type cytochromes. Transiently binds heme delivered by CcmC and transfers the heme to apo-cytochromes in a process facilitated by CcmF and CcmH.</text>
</comment>
<comment type="subcellular location">
    <subcellularLocation>
        <location evidence="1">Cell inner membrane</location>
        <topology evidence="1">Single-pass type II membrane protein</topology>
        <orientation evidence="1">Periplasmic side</orientation>
    </subcellularLocation>
</comment>
<comment type="similarity">
    <text evidence="1">Belongs to the CcmE/CycJ family.</text>
</comment>
<organism>
    <name type="scientific">Paramagnetospirillum magneticum (strain ATCC 700264 / AMB-1)</name>
    <name type="common">Magnetospirillum magneticum</name>
    <dbReference type="NCBI Taxonomy" id="342108"/>
    <lineage>
        <taxon>Bacteria</taxon>
        <taxon>Pseudomonadati</taxon>
        <taxon>Pseudomonadota</taxon>
        <taxon>Alphaproteobacteria</taxon>
        <taxon>Rhodospirillales</taxon>
        <taxon>Magnetospirillaceae</taxon>
        <taxon>Paramagnetospirillum</taxon>
    </lineage>
</organism>
<gene>
    <name evidence="1" type="primary">ccmE</name>
    <name evidence="1" type="synonym">cycJ</name>
    <name type="ordered locus">amb4199</name>
</gene>
<sequence length="148" mass="16242">MTRKQRRLYFVLLGMAALGGAVALVLTAISDSLVYFYSPTDIVSQRIPEGRRMRIGGLVENDSVVKDGKTVTFKVTDVTNAVPVVYTGVLPDLFREGQGVVVEGRMEAGGHFKASEVLAKHDENYMPKEVAEALKKSGQWNDGKQPKQ</sequence>
<reference key="1">
    <citation type="journal article" date="2005" name="DNA Res.">
        <title>Complete genome sequence of the facultative anaerobic magnetotactic bacterium Magnetospirillum sp. strain AMB-1.</title>
        <authorList>
            <person name="Matsunaga T."/>
            <person name="Okamura Y."/>
            <person name="Fukuda Y."/>
            <person name="Wahyudi A.T."/>
            <person name="Murase Y."/>
            <person name="Takeyama H."/>
        </authorList>
    </citation>
    <scope>NUCLEOTIDE SEQUENCE [LARGE SCALE GENOMIC DNA]</scope>
    <source>
        <strain>ATCC 700264 / AMB-1</strain>
    </source>
</reference>